<keyword id="KW-0175">Coiled coil</keyword>
<keyword id="KW-0963">Cytoplasm</keyword>
<keyword id="KW-0206">Cytoskeleton</keyword>
<keyword id="KW-0488">Methylation</keyword>
<keyword id="KW-0539">Nucleus</keyword>
<keyword id="KW-0597">Phosphoprotein</keyword>
<keyword id="KW-1185">Reference proteome</keyword>
<evidence type="ECO:0000250" key="1">
    <source>
        <dbReference type="UniProtKB" id="Q6PB51"/>
    </source>
</evidence>
<evidence type="ECO:0000250" key="2">
    <source>
        <dbReference type="UniProtKB" id="Q8IWD4"/>
    </source>
</evidence>
<evidence type="ECO:0000255" key="3"/>
<evidence type="ECO:0000256" key="4">
    <source>
        <dbReference type="SAM" id="MobiDB-lite"/>
    </source>
</evidence>
<evidence type="ECO:0000305" key="5"/>
<evidence type="ECO:0000312" key="6">
    <source>
        <dbReference type="RGD" id="1561762"/>
    </source>
</evidence>
<comment type="function">
    <text evidence="2">Facilitates DNA repair, cell cycle progression, and cell proliferation through its interaction with CIAO2B.</text>
</comment>
<comment type="subunit">
    <text evidence="2">Interacts with CIAO2B; the interaction is direct. Interacts with MMS19; the interaction is indirect.</text>
</comment>
<comment type="subcellular location">
    <subcellularLocation>
        <location evidence="2">Cytoplasm</location>
        <location evidence="2">Cytoskeleton</location>
        <location evidence="2">Spindle</location>
    </subcellularLocation>
    <subcellularLocation>
        <location evidence="2">Nucleus</location>
    </subcellularLocation>
    <text evidence="2">Mitotic spindle.</text>
</comment>
<reference key="1">
    <citation type="journal article" date="2004" name="Genome Res.">
        <title>The status, quality, and expansion of the NIH full-length cDNA project: the Mammalian Gene Collection (MGC).</title>
        <authorList>
            <consortium name="The MGC Project Team"/>
        </authorList>
    </citation>
    <scope>NUCLEOTIDE SEQUENCE [LARGE SCALE MRNA]</scope>
    <source>
        <tissue>Lung</tissue>
    </source>
</reference>
<name>CC117_RAT</name>
<organism>
    <name type="scientific">Rattus norvegicus</name>
    <name type="common">Rat</name>
    <dbReference type="NCBI Taxonomy" id="10116"/>
    <lineage>
        <taxon>Eukaryota</taxon>
        <taxon>Metazoa</taxon>
        <taxon>Chordata</taxon>
        <taxon>Craniata</taxon>
        <taxon>Vertebrata</taxon>
        <taxon>Euteleostomi</taxon>
        <taxon>Mammalia</taxon>
        <taxon>Eutheria</taxon>
        <taxon>Euarchontoglires</taxon>
        <taxon>Glires</taxon>
        <taxon>Rodentia</taxon>
        <taxon>Myomorpha</taxon>
        <taxon>Muroidea</taxon>
        <taxon>Muridae</taxon>
        <taxon>Murinae</taxon>
        <taxon>Rattus</taxon>
    </lineage>
</organism>
<feature type="chain" id="PRO_0000254140" description="Coiled-coil domain-containing protein 117">
    <location>
        <begin position="1"/>
        <end position="277"/>
    </location>
</feature>
<feature type="region of interest" description="Disordered" evidence="4">
    <location>
        <begin position="22"/>
        <end position="69"/>
    </location>
</feature>
<feature type="region of interest" description="Disordered" evidence="4">
    <location>
        <begin position="216"/>
        <end position="242"/>
    </location>
</feature>
<feature type="region of interest" description="Disordered" evidence="4">
    <location>
        <begin position="255"/>
        <end position="277"/>
    </location>
</feature>
<feature type="coiled-coil region" evidence="3">
    <location>
        <begin position="139"/>
        <end position="166"/>
    </location>
</feature>
<feature type="compositionally biased region" description="Low complexity" evidence="4">
    <location>
        <begin position="23"/>
        <end position="55"/>
    </location>
</feature>
<feature type="compositionally biased region" description="Basic residues" evidence="4">
    <location>
        <begin position="58"/>
        <end position="69"/>
    </location>
</feature>
<feature type="compositionally biased region" description="Polar residues" evidence="4">
    <location>
        <begin position="225"/>
        <end position="242"/>
    </location>
</feature>
<feature type="modified residue" description="Omega-N-methylarginine" evidence="1">
    <location>
        <position position="47"/>
    </location>
</feature>
<feature type="modified residue" description="Phosphoserine" evidence="2">
    <location>
        <position position="52"/>
    </location>
</feature>
<protein>
    <recommendedName>
        <fullName evidence="5">Coiled-coil domain-containing protein 117</fullName>
    </recommendedName>
</protein>
<dbReference type="EMBL" id="BC087119">
    <property type="protein sequence ID" value="AAH87119.1"/>
    <property type="molecule type" value="mRNA"/>
</dbReference>
<dbReference type="RefSeq" id="NP_001017502.1">
    <property type="nucleotide sequence ID" value="NM_001017502.1"/>
</dbReference>
<dbReference type="FunCoup" id="Q5M9G5">
    <property type="interactions" value="2283"/>
</dbReference>
<dbReference type="STRING" id="10116.ENSRNOP00000015627"/>
<dbReference type="iPTMnet" id="Q5M9G5"/>
<dbReference type="PhosphoSitePlus" id="Q5M9G5"/>
<dbReference type="PaxDb" id="10116-ENSRNOP00000015627"/>
<dbReference type="Ensembl" id="ENSRNOT00000015627.5">
    <property type="protein sequence ID" value="ENSRNOP00000015627.3"/>
    <property type="gene ID" value="ENSRNOG00000010706.5"/>
</dbReference>
<dbReference type="GeneID" id="498404"/>
<dbReference type="KEGG" id="rno:498404"/>
<dbReference type="UCSC" id="RGD:1561762">
    <property type="organism name" value="rat"/>
</dbReference>
<dbReference type="AGR" id="RGD:1561762"/>
<dbReference type="CTD" id="150275"/>
<dbReference type="RGD" id="1561762">
    <property type="gene designation" value="Ccdc117"/>
</dbReference>
<dbReference type="eggNOG" id="ENOG502S42Q">
    <property type="taxonomic scope" value="Eukaryota"/>
</dbReference>
<dbReference type="GeneTree" id="ENSGT00390000005772"/>
<dbReference type="HOGENOM" id="CLU_083045_0_0_1"/>
<dbReference type="InParanoid" id="Q5M9G5"/>
<dbReference type="OMA" id="NTSWERR"/>
<dbReference type="OrthoDB" id="9450632at2759"/>
<dbReference type="PhylomeDB" id="Q5M9G5"/>
<dbReference type="TreeFam" id="TF335674"/>
<dbReference type="PRO" id="PR:Q5M9G5"/>
<dbReference type="Proteomes" id="UP000002494">
    <property type="component" value="Chromosome 14"/>
</dbReference>
<dbReference type="Bgee" id="ENSRNOG00000010706">
    <property type="expression patterns" value="Expressed in stomach and 20 other cell types or tissues"/>
</dbReference>
<dbReference type="GO" id="GO:0005737">
    <property type="term" value="C:cytoplasm"/>
    <property type="evidence" value="ECO:0007669"/>
    <property type="project" value="UniProtKB-KW"/>
</dbReference>
<dbReference type="GO" id="GO:0072686">
    <property type="term" value="C:mitotic spindle"/>
    <property type="evidence" value="ECO:0000250"/>
    <property type="project" value="UniProtKB"/>
</dbReference>
<dbReference type="GO" id="GO:0005634">
    <property type="term" value="C:nucleus"/>
    <property type="evidence" value="ECO:0007669"/>
    <property type="project" value="UniProtKB-SubCell"/>
</dbReference>
<dbReference type="GO" id="GO:0008284">
    <property type="term" value="P:positive regulation of cell population proliferation"/>
    <property type="evidence" value="ECO:0000250"/>
    <property type="project" value="UniProtKB"/>
</dbReference>
<dbReference type="GO" id="GO:0045739">
    <property type="term" value="P:positive regulation of DNA repair"/>
    <property type="evidence" value="ECO:0000250"/>
    <property type="project" value="UniProtKB"/>
</dbReference>
<dbReference type="InterPro" id="IPR031630">
    <property type="entry name" value="CCDC117"/>
</dbReference>
<dbReference type="PANTHER" id="PTHR36128">
    <property type="entry name" value="COILED-COIL DOMAIN-CONTAINING PROTEIN 117"/>
    <property type="match status" value="1"/>
</dbReference>
<dbReference type="PANTHER" id="PTHR36128:SF1">
    <property type="entry name" value="COILED-COIL DOMAIN-CONTAINING PROTEIN 117"/>
    <property type="match status" value="1"/>
</dbReference>
<dbReference type="Pfam" id="PF15810">
    <property type="entry name" value="CCDC117"/>
    <property type="match status" value="1"/>
</dbReference>
<accession>Q5M9G5</accession>
<proteinExistence type="evidence at transcript level"/>
<gene>
    <name evidence="6" type="primary">Ccdc117</name>
</gene>
<sequence length="277" mass="30360">MAALGRPFSGLPLSGSADFLQSPPAFAGRAFPPGAAGHDLAPRPGVRGPPSSPDGRTARGRVSIHCRKKHKRLAEDDECPVRKKRLTEAELGAVADEWVLGTHQGIEGHGVNTCPGGLSVPSILDAVCEEMDQTTGEPQCEVARRRLQEIEDRIIDEDEEVESDRNVSHLPSLVLSDTMKTGLKREFDEVFTKKMIESMSRPSMELVLWKPLPELLSEKPKPSSNPKNYMGESQTKHTATGTAFPQRTEVLLEPQCTDTPLYHSLETAASTEEEMEL</sequence>